<gene>
    <name type="ordered locus">LAR_0869</name>
</gene>
<sequence length="190" mass="22899">MKRVWVTGYRSYELNIFKDNDPKVQVIKEVLKNYLRAQLELNDDEFWVITGPQMGTERWGLEAALELQADFPQLKTALMFPFAEFGKQWNENNQLKLTSITQQVDFFANVSDKPYQSPQQLRNYQQFMLTHTDEAFLLYDPEYQGKTKYDYEIIQKYKEESEYSMTFVDFDELQEEAEEWAERQREKDEF</sequence>
<proteinExistence type="inferred from homology"/>
<accession>B2G7F3</accession>
<name>Y869_LIMRJ</name>
<feature type="chain" id="PRO_0000382548" description="UPF0398 protein LAR_0869">
    <location>
        <begin position="1"/>
        <end position="190"/>
    </location>
</feature>
<dbReference type="EMBL" id="AP007281">
    <property type="protein sequence ID" value="BAG25385.1"/>
    <property type="molecule type" value="Genomic_DNA"/>
</dbReference>
<dbReference type="RefSeq" id="WP_003667871.1">
    <property type="nucleotide sequence ID" value="NC_010609.1"/>
</dbReference>
<dbReference type="SMR" id="B2G7F3"/>
<dbReference type="KEGG" id="lrf:LAR_0869"/>
<dbReference type="HOGENOM" id="CLU_105319_0_0_9"/>
<dbReference type="Gene3D" id="3.40.50.450">
    <property type="match status" value="1"/>
</dbReference>
<dbReference type="HAMAP" id="MF_01575">
    <property type="entry name" value="UPF0398"/>
    <property type="match status" value="1"/>
</dbReference>
<dbReference type="InterPro" id="IPR010697">
    <property type="entry name" value="YspA"/>
</dbReference>
<dbReference type="NCBIfam" id="NF010181">
    <property type="entry name" value="PRK13660.1"/>
    <property type="match status" value="1"/>
</dbReference>
<dbReference type="PANTHER" id="PTHR38440:SF1">
    <property type="entry name" value="UPF0398 PROTEIN SPR0331"/>
    <property type="match status" value="1"/>
</dbReference>
<dbReference type="PANTHER" id="PTHR38440">
    <property type="entry name" value="UPF0398 PROTEIN YPSA"/>
    <property type="match status" value="1"/>
</dbReference>
<dbReference type="Pfam" id="PF06908">
    <property type="entry name" value="YpsA"/>
    <property type="match status" value="1"/>
</dbReference>
<dbReference type="PIRSF" id="PIRSF021290">
    <property type="entry name" value="DUF1273"/>
    <property type="match status" value="1"/>
</dbReference>
<dbReference type="SUPFAM" id="SSF102405">
    <property type="entry name" value="MCP/YpsA-like"/>
    <property type="match status" value="1"/>
</dbReference>
<protein>
    <recommendedName>
        <fullName evidence="1">UPF0398 protein LAR_0869</fullName>
    </recommendedName>
</protein>
<evidence type="ECO:0000255" key="1">
    <source>
        <dbReference type="HAMAP-Rule" id="MF_01575"/>
    </source>
</evidence>
<reference key="1">
    <citation type="journal article" date="2008" name="DNA Res.">
        <title>Comparative genome analysis of Lactobacillus reuteri and Lactobacillus fermentum reveal a genomic island for reuterin and cobalamin production.</title>
        <authorList>
            <person name="Morita H."/>
            <person name="Toh H."/>
            <person name="Fukuda S."/>
            <person name="Horikawa H."/>
            <person name="Oshima K."/>
            <person name="Suzuki T."/>
            <person name="Murakami M."/>
            <person name="Hisamatsu S."/>
            <person name="Kato Y."/>
            <person name="Takizawa T."/>
            <person name="Fukuoka H."/>
            <person name="Yoshimura T."/>
            <person name="Itoh K."/>
            <person name="O'Sullivan D.J."/>
            <person name="McKay L.L."/>
            <person name="Ohno H."/>
            <person name="Kikuchi J."/>
            <person name="Masaoka T."/>
            <person name="Hattori M."/>
        </authorList>
    </citation>
    <scope>NUCLEOTIDE SEQUENCE [LARGE SCALE GENOMIC DNA]</scope>
    <source>
        <strain>JCM 1112</strain>
    </source>
</reference>
<organism>
    <name type="scientific">Limosilactobacillus reuteri subsp. reuteri (strain JCM 1112)</name>
    <name type="common">Lactobacillus reuteri</name>
    <dbReference type="NCBI Taxonomy" id="557433"/>
    <lineage>
        <taxon>Bacteria</taxon>
        <taxon>Bacillati</taxon>
        <taxon>Bacillota</taxon>
        <taxon>Bacilli</taxon>
        <taxon>Lactobacillales</taxon>
        <taxon>Lactobacillaceae</taxon>
        <taxon>Limosilactobacillus</taxon>
    </lineage>
</organism>
<comment type="similarity">
    <text evidence="1">Belongs to the UPF0398 family.</text>
</comment>